<accession>P0C9B1</accession>
<organism>
    <name type="scientific">African swine fever virus (isolate Tick/South Africa/Pretoriuskop Pr4/1996)</name>
    <name type="common">ASFV</name>
    <dbReference type="NCBI Taxonomy" id="561443"/>
    <lineage>
        <taxon>Viruses</taxon>
        <taxon>Varidnaviria</taxon>
        <taxon>Bamfordvirae</taxon>
        <taxon>Nucleocytoviricota</taxon>
        <taxon>Pokkesviricetes</taxon>
        <taxon>Asfuvirales</taxon>
        <taxon>Asfarviridae</taxon>
        <taxon>Asfivirus</taxon>
        <taxon>African swine fever virus</taxon>
    </lineage>
</organism>
<comment type="function">
    <text evidence="2">Putative DNA-dependent ATPase required for providing the needed energy to achieve the termination of early transcripts.</text>
</comment>
<comment type="subunit">
    <text evidence="3">Part of the viral DNA-directed RNA polymerase that consists of 8 polII-like subunits (RPB1, RPB2, RPB3, RPB5, RPB6, RPB7, RPB9, RPB10), a capping enzyme and a termination factor.</text>
</comment>
<comment type="subcellular location">
    <subcellularLocation>
        <location evidence="3">Virion</location>
    </subcellularLocation>
    <text evidence="3">Found in association with viral nucleoid.</text>
</comment>
<comment type="induction">
    <text evidence="4">Expressed in the late phase of the viral replicative cycle.</text>
</comment>
<comment type="similarity">
    <text evidence="4">Belongs to the DEAD box helicase family. DEAH subfamily.</text>
</comment>
<dbReference type="EC" id="3.6.4.-" evidence="3"/>
<dbReference type="EMBL" id="AY261363">
    <property type="status" value="NOT_ANNOTATED_CDS"/>
    <property type="molecule type" value="Genomic_DNA"/>
</dbReference>
<dbReference type="Proteomes" id="UP000000859">
    <property type="component" value="Segment"/>
</dbReference>
<dbReference type="GO" id="GO:0044423">
    <property type="term" value="C:virion component"/>
    <property type="evidence" value="ECO:0007669"/>
    <property type="project" value="UniProtKB-KW"/>
</dbReference>
<dbReference type="GO" id="GO:0005524">
    <property type="term" value="F:ATP binding"/>
    <property type="evidence" value="ECO:0007669"/>
    <property type="project" value="UniProtKB-KW"/>
</dbReference>
<dbReference type="GO" id="GO:0016787">
    <property type="term" value="F:hydrolase activity"/>
    <property type="evidence" value="ECO:0007669"/>
    <property type="project" value="UniProtKB-KW"/>
</dbReference>
<dbReference type="GO" id="GO:0003724">
    <property type="term" value="F:RNA helicase activity"/>
    <property type="evidence" value="ECO:0007669"/>
    <property type="project" value="UniProtKB-EC"/>
</dbReference>
<dbReference type="GO" id="GO:0006281">
    <property type="term" value="P:DNA repair"/>
    <property type="evidence" value="ECO:0007669"/>
    <property type="project" value="TreeGrafter"/>
</dbReference>
<dbReference type="GO" id="GO:0006353">
    <property type="term" value="P:DNA-templated transcription termination"/>
    <property type="evidence" value="ECO:0007669"/>
    <property type="project" value="UniProtKB-KW"/>
</dbReference>
<dbReference type="GO" id="GO:0031297">
    <property type="term" value="P:replication fork processing"/>
    <property type="evidence" value="ECO:0007669"/>
    <property type="project" value="TreeGrafter"/>
</dbReference>
<dbReference type="Gene3D" id="3.40.50.300">
    <property type="entry name" value="P-loop containing nucleotide triphosphate hydrolases"/>
    <property type="match status" value="1"/>
</dbReference>
<dbReference type="Gene3D" id="3.40.50.10810">
    <property type="entry name" value="Tandem AAA-ATPase domain"/>
    <property type="match status" value="1"/>
</dbReference>
<dbReference type="InterPro" id="IPR014001">
    <property type="entry name" value="Helicase_ATP-bd"/>
</dbReference>
<dbReference type="InterPro" id="IPR001650">
    <property type="entry name" value="Helicase_C-like"/>
</dbReference>
<dbReference type="InterPro" id="IPR027417">
    <property type="entry name" value="P-loop_NTPase"/>
</dbReference>
<dbReference type="InterPro" id="IPR038718">
    <property type="entry name" value="SNF2-like_sf"/>
</dbReference>
<dbReference type="InterPro" id="IPR000330">
    <property type="entry name" value="SNF2_N"/>
</dbReference>
<dbReference type="PANTHER" id="PTHR45766">
    <property type="entry name" value="DNA ANNEALING HELICASE AND ENDONUCLEASE ZRANB3 FAMILY MEMBER"/>
    <property type="match status" value="1"/>
</dbReference>
<dbReference type="PANTHER" id="PTHR45766:SF6">
    <property type="entry name" value="SWI_SNF-RELATED MATRIX-ASSOCIATED ACTIN-DEPENDENT REGULATOR OF CHROMATIN SUBFAMILY A-LIKE PROTEIN 1"/>
    <property type="match status" value="1"/>
</dbReference>
<dbReference type="Pfam" id="PF00271">
    <property type="entry name" value="Helicase_C"/>
    <property type="match status" value="1"/>
</dbReference>
<dbReference type="Pfam" id="PF00176">
    <property type="entry name" value="SNF2-rel_dom"/>
    <property type="match status" value="1"/>
</dbReference>
<dbReference type="SMART" id="SM00487">
    <property type="entry name" value="DEXDc"/>
    <property type="match status" value="1"/>
</dbReference>
<dbReference type="SMART" id="SM00490">
    <property type="entry name" value="HELICc"/>
    <property type="match status" value="1"/>
</dbReference>
<dbReference type="SUPFAM" id="SSF52540">
    <property type="entry name" value="P-loop containing nucleoside triphosphate hydrolases"/>
    <property type="match status" value="2"/>
</dbReference>
<name>TFNPH_ASFP4</name>
<evidence type="ECO:0000250" key="1"/>
<evidence type="ECO:0000250" key="2">
    <source>
        <dbReference type="UniProtKB" id="P05807"/>
    </source>
</evidence>
<evidence type="ECO:0000250" key="3">
    <source>
        <dbReference type="UniProtKB" id="Q89581"/>
    </source>
</evidence>
<evidence type="ECO:0000305" key="4"/>
<reference key="1">
    <citation type="submission" date="2003-03" db="EMBL/GenBank/DDBJ databases">
        <title>African swine fever virus genomes.</title>
        <authorList>
            <person name="Kutish G.F."/>
            <person name="Rock D.L."/>
        </authorList>
    </citation>
    <scope>NUCLEOTIDE SEQUENCE [GENOMIC DNA]</scope>
</reference>
<feature type="chain" id="PRO_0000373119" description="Termination factor NPH-I homolog">
    <location>
        <begin position="1"/>
        <end position="706"/>
    </location>
</feature>
<feature type="domain" description="Helicase ATP-binding">
    <location>
        <begin position="62"/>
        <end position="227"/>
    </location>
</feature>
<feature type="domain" description="Helicase C-terminal">
    <location>
        <begin position="417"/>
        <end position="599"/>
    </location>
</feature>
<feature type="short sequence motif" description="DEAH box">
    <location>
        <begin position="168"/>
        <end position="171"/>
    </location>
</feature>
<feature type="binding site" evidence="1">
    <location>
        <begin position="75"/>
        <end position="82"/>
    </location>
    <ligand>
        <name>ATP</name>
        <dbReference type="ChEBI" id="CHEBI:30616"/>
    </ligand>
</feature>
<organismHost>
    <name type="scientific">Ornithodoros</name>
    <name type="common">relapsing fever ticks</name>
    <dbReference type="NCBI Taxonomy" id="6937"/>
</organismHost>
<organismHost>
    <name type="scientific">Phacochoerus aethiopicus</name>
    <name type="common">Warthog</name>
    <dbReference type="NCBI Taxonomy" id="85517"/>
</organismHost>
<organismHost>
    <name type="scientific">Phacochoerus africanus</name>
    <name type="common">Warthog</name>
    <dbReference type="NCBI Taxonomy" id="41426"/>
</organismHost>
<organismHost>
    <name type="scientific">Potamochoerus larvatus</name>
    <name type="common">Bushpig</name>
    <dbReference type="NCBI Taxonomy" id="273792"/>
</organismHost>
<organismHost>
    <name type="scientific">Sus scrofa</name>
    <name type="common">Pig</name>
    <dbReference type="NCBI Taxonomy" id="9823"/>
</organismHost>
<gene>
    <name type="ordered locus">Pret-134</name>
</gene>
<proteinExistence type="inferred from homology"/>
<keyword id="KW-0067">ATP-binding</keyword>
<keyword id="KW-0347">Helicase</keyword>
<keyword id="KW-0378">Hydrolase</keyword>
<keyword id="KW-0426">Late protein</keyword>
<keyword id="KW-0547">Nucleotide-binding</keyword>
<keyword id="KW-0804">Transcription</keyword>
<keyword id="KW-0805">Transcription regulation</keyword>
<keyword id="KW-0806">Transcription termination</keyword>
<keyword id="KW-0946">Virion</keyword>
<sequence length="706" mass="80309">MSCVHNNTSFPVQTEAYLKEVFEKYKELQESKDTSLTARFARALKYYQFLIYTAFSDPKFGIGQGENTRGLLIYHQMGMGKTILSLSLAISLSHIYNPILIAPKSLHSNFQQSLLKLIKLLYPETTDHSKELQKISRRFRFVSLDAYNMGQQIIKAGGSLNGCLLIVDEAHNLFRGIINSANDKTNARQLYNNIMQAKNIRILFLTGTPCSKDPFEMVPCFNMLSGRILLPLHYERFYTAYVNKTTNSPLNADKLLNRLVGMISYAGNQNELNKLFPTELPLIIEKVEMSPEQYRQYLLARDVENAEKHASSGMYEKINAAALCLPGSEQESGSSYYVRSRMISIFASEMLTVKEDEKLSEAVQQLPKEAFTENSSPKIVCMLKNIKTSPGPVLIYSQFVELGLHVVARFLEIEGYQCLQPLKVLEEGHNTILLHKDGKDLMVKNFAEDGPTHTLVLSSKITRFTLITGKILSKERDMIQQLWNSPLNIHGEVIKILLVSKTGAEGLDLKYGRQVHILEPYWDKAREDQVKARIIRIGSHDALPPEEKTVQPFLYIAVANQKMFYSIPEGSQEQKTIDERFHERGLEKSHLNSAFRDLLKRAAIECAFNGESGCLMCQPTNALLFHENFERDLRLPNPCQPLVKAEVKAYSISYEGKQFFYQKNKDVGLGYTFYEYNPIIKAYIEIKPSNPLYIKLIKHVQAGTTA</sequence>
<protein>
    <recommendedName>
        <fullName evidence="3">Termination factor NPH-I homolog</fullName>
        <ecNumber evidence="3">3.6.4.-</ecNumber>
    </recommendedName>
</protein>